<organism>
    <name type="scientific">Corynebacterium glutamicum (strain R)</name>
    <dbReference type="NCBI Taxonomy" id="340322"/>
    <lineage>
        <taxon>Bacteria</taxon>
        <taxon>Bacillati</taxon>
        <taxon>Actinomycetota</taxon>
        <taxon>Actinomycetes</taxon>
        <taxon>Mycobacteriales</taxon>
        <taxon>Corynebacteriaceae</taxon>
        <taxon>Corynebacterium</taxon>
    </lineage>
</organism>
<sequence>MVFVSDSSISLPIWDAPRARGPIVSDLAIPGSKSITNRALILAALASTPSTIIDVLRSRDTDLMTDGLRSLGITITEEAVDRYRVEPGQLSAGSVECGLAGTVMRFLPPVAAFADGPVHFDGDPQARVRPMTSILDALRSLGVEVDNNNLPFTVNAGEVPEGGVVEIDASGSSQFVSGLLLSAPRFKNGVTVKHVGGRLPSMPHIEMTVDMLRSAGIEIEESENQWVVHPGEILGRTWRIEPDLSNATPFLAAAAVTGGTIKINHWPIKTTQPGDAIRSILERMGCEVELVAQGEGYDLSVTGPVALKGIEIDMSDIGELTPTVAALAALASTESRLTGIAHLRGHETDRLAALTAEINKLGGKCTELKDGLLIEPASLHGGVWHSYADHRMATAGAIIGLAVDDVQVEDIKTTSKTFPGFENVWEEMVG</sequence>
<gene>
    <name evidence="1" type="primary">aroA</name>
    <name type="ordered locus">cgR_0873</name>
</gene>
<protein>
    <recommendedName>
        <fullName evidence="1">3-phosphoshikimate 1-carboxyvinyltransferase</fullName>
        <ecNumber evidence="1">2.5.1.19</ecNumber>
    </recommendedName>
    <alternativeName>
        <fullName evidence="1">5-enolpyruvylshikimate-3-phosphate synthase</fullName>
        <shortName evidence="1">EPSP synthase</shortName>
        <shortName evidence="1">EPSPS</shortName>
    </alternativeName>
</protein>
<reference key="1">
    <citation type="journal article" date="2007" name="Microbiology">
        <title>Comparative analysis of the Corynebacterium glutamicum group and complete genome sequence of strain R.</title>
        <authorList>
            <person name="Yukawa H."/>
            <person name="Omumasaba C.A."/>
            <person name="Nonaka H."/>
            <person name="Kos P."/>
            <person name="Okai N."/>
            <person name="Suzuki N."/>
            <person name="Suda M."/>
            <person name="Tsuge Y."/>
            <person name="Watanabe J."/>
            <person name="Ikeda Y."/>
            <person name="Vertes A.A."/>
            <person name="Inui M."/>
        </authorList>
    </citation>
    <scope>NUCLEOTIDE SEQUENCE [LARGE SCALE GENOMIC DNA]</scope>
    <source>
        <strain>R</strain>
    </source>
</reference>
<feature type="chain" id="PRO_1000099693" description="3-phosphoshikimate 1-carboxyvinyltransferase">
    <location>
        <begin position="1"/>
        <end position="430"/>
    </location>
</feature>
<feature type="active site" description="Proton acceptor" evidence="1">
    <location>
        <position position="319"/>
    </location>
</feature>
<feature type="binding site" evidence="1">
    <location>
        <position position="33"/>
    </location>
    <ligand>
        <name>3-phosphoshikimate</name>
        <dbReference type="ChEBI" id="CHEBI:145989"/>
    </ligand>
</feature>
<feature type="binding site" evidence="1">
    <location>
        <position position="33"/>
    </location>
    <ligand>
        <name>phosphoenolpyruvate</name>
        <dbReference type="ChEBI" id="CHEBI:58702"/>
    </ligand>
</feature>
<feature type="binding site" evidence="1">
    <location>
        <position position="34"/>
    </location>
    <ligand>
        <name>3-phosphoshikimate</name>
        <dbReference type="ChEBI" id="CHEBI:145989"/>
    </ligand>
</feature>
<feature type="binding site" evidence="1">
    <location>
        <position position="38"/>
    </location>
    <ligand>
        <name>3-phosphoshikimate</name>
        <dbReference type="ChEBI" id="CHEBI:145989"/>
    </ligand>
</feature>
<feature type="binding site" evidence="1">
    <location>
        <position position="101"/>
    </location>
    <ligand>
        <name>phosphoenolpyruvate</name>
        <dbReference type="ChEBI" id="CHEBI:58702"/>
    </ligand>
</feature>
<feature type="binding site" evidence="1">
    <location>
        <position position="129"/>
    </location>
    <ligand>
        <name>phosphoenolpyruvate</name>
        <dbReference type="ChEBI" id="CHEBI:58702"/>
    </ligand>
</feature>
<feature type="binding site" evidence="1">
    <location>
        <position position="172"/>
    </location>
    <ligand>
        <name>3-phosphoshikimate</name>
        <dbReference type="ChEBI" id="CHEBI:145989"/>
    </ligand>
</feature>
<feature type="binding site" evidence="1">
    <location>
        <position position="173"/>
    </location>
    <ligand>
        <name>3-phosphoshikimate</name>
        <dbReference type="ChEBI" id="CHEBI:145989"/>
    </ligand>
</feature>
<feature type="binding site" evidence="1">
    <location>
        <position position="174"/>
    </location>
    <ligand>
        <name>3-phosphoshikimate</name>
        <dbReference type="ChEBI" id="CHEBI:145989"/>
    </ligand>
</feature>
<feature type="binding site" evidence="1">
    <location>
        <position position="174"/>
    </location>
    <ligand>
        <name>phosphoenolpyruvate</name>
        <dbReference type="ChEBI" id="CHEBI:58702"/>
    </ligand>
</feature>
<feature type="binding site" evidence="1">
    <location>
        <position position="201"/>
    </location>
    <ligand>
        <name>3-phosphoshikimate</name>
        <dbReference type="ChEBI" id="CHEBI:145989"/>
    </ligand>
</feature>
<feature type="binding site" evidence="1">
    <location>
        <position position="319"/>
    </location>
    <ligand>
        <name>3-phosphoshikimate</name>
        <dbReference type="ChEBI" id="CHEBI:145989"/>
    </ligand>
</feature>
<feature type="binding site" evidence="1">
    <location>
        <position position="346"/>
    </location>
    <ligand>
        <name>3-phosphoshikimate</name>
        <dbReference type="ChEBI" id="CHEBI:145989"/>
    </ligand>
</feature>
<feature type="binding site" evidence="1">
    <location>
        <position position="350"/>
    </location>
    <ligand>
        <name>phosphoenolpyruvate</name>
        <dbReference type="ChEBI" id="CHEBI:58702"/>
    </ligand>
</feature>
<feature type="binding site" evidence="1">
    <location>
        <position position="391"/>
    </location>
    <ligand>
        <name>phosphoenolpyruvate</name>
        <dbReference type="ChEBI" id="CHEBI:58702"/>
    </ligand>
</feature>
<feature type="binding site" evidence="1">
    <location>
        <position position="416"/>
    </location>
    <ligand>
        <name>phosphoenolpyruvate</name>
        <dbReference type="ChEBI" id="CHEBI:58702"/>
    </ligand>
</feature>
<evidence type="ECO:0000255" key="1">
    <source>
        <dbReference type="HAMAP-Rule" id="MF_00210"/>
    </source>
</evidence>
<name>AROA_CORGB</name>
<comment type="function">
    <text evidence="1">Catalyzes the transfer of the enolpyruvyl moiety of phosphoenolpyruvate (PEP) to the 5-hydroxyl of shikimate-3-phosphate (S3P) to produce enolpyruvyl shikimate-3-phosphate and inorganic phosphate.</text>
</comment>
<comment type="catalytic activity">
    <reaction evidence="1">
        <text>3-phosphoshikimate + phosphoenolpyruvate = 5-O-(1-carboxyvinyl)-3-phosphoshikimate + phosphate</text>
        <dbReference type="Rhea" id="RHEA:21256"/>
        <dbReference type="ChEBI" id="CHEBI:43474"/>
        <dbReference type="ChEBI" id="CHEBI:57701"/>
        <dbReference type="ChEBI" id="CHEBI:58702"/>
        <dbReference type="ChEBI" id="CHEBI:145989"/>
        <dbReference type="EC" id="2.5.1.19"/>
    </reaction>
    <physiologicalReaction direction="left-to-right" evidence="1">
        <dbReference type="Rhea" id="RHEA:21257"/>
    </physiologicalReaction>
</comment>
<comment type="pathway">
    <text evidence="1">Metabolic intermediate biosynthesis; chorismate biosynthesis; chorismate from D-erythrose 4-phosphate and phosphoenolpyruvate: step 6/7.</text>
</comment>
<comment type="subunit">
    <text evidence="1">Monomer.</text>
</comment>
<comment type="subcellular location">
    <subcellularLocation>
        <location evidence="1">Cytoplasm</location>
    </subcellularLocation>
</comment>
<comment type="similarity">
    <text evidence="1">Belongs to the EPSP synthase family.</text>
</comment>
<keyword id="KW-0028">Amino-acid biosynthesis</keyword>
<keyword id="KW-0057">Aromatic amino acid biosynthesis</keyword>
<keyword id="KW-0963">Cytoplasm</keyword>
<keyword id="KW-0808">Transferase</keyword>
<dbReference type="EC" id="2.5.1.19" evidence="1"/>
<dbReference type="EMBL" id="AP009044">
    <property type="protein sequence ID" value="BAF53846.1"/>
    <property type="molecule type" value="Genomic_DNA"/>
</dbReference>
<dbReference type="RefSeq" id="WP_003858169.1">
    <property type="nucleotide sequence ID" value="NC_009342.1"/>
</dbReference>
<dbReference type="SMR" id="A4QC99"/>
<dbReference type="KEGG" id="cgt:cgR_0873"/>
<dbReference type="HOGENOM" id="CLU_024321_0_0_11"/>
<dbReference type="PhylomeDB" id="A4QC99"/>
<dbReference type="UniPathway" id="UPA00053">
    <property type="reaction ID" value="UER00089"/>
</dbReference>
<dbReference type="Proteomes" id="UP000006698">
    <property type="component" value="Chromosome"/>
</dbReference>
<dbReference type="GO" id="GO:0005737">
    <property type="term" value="C:cytoplasm"/>
    <property type="evidence" value="ECO:0007669"/>
    <property type="project" value="UniProtKB-SubCell"/>
</dbReference>
<dbReference type="GO" id="GO:0003866">
    <property type="term" value="F:3-phosphoshikimate 1-carboxyvinyltransferase activity"/>
    <property type="evidence" value="ECO:0007669"/>
    <property type="project" value="UniProtKB-UniRule"/>
</dbReference>
<dbReference type="GO" id="GO:0008652">
    <property type="term" value="P:amino acid biosynthetic process"/>
    <property type="evidence" value="ECO:0007669"/>
    <property type="project" value="UniProtKB-KW"/>
</dbReference>
<dbReference type="GO" id="GO:0009073">
    <property type="term" value="P:aromatic amino acid family biosynthetic process"/>
    <property type="evidence" value="ECO:0007669"/>
    <property type="project" value="UniProtKB-KW"/>
</dbReference>
<dbReference type="GO" id="GO:0009423">
    <property type="term" value="P:chorismate biosynthetic process"/>
    <property type="evidence" value="ECO:0007669"/>
    <property type="project" value="UniProtKB-UniRule"/>
</dbReference>
<dbReference type="CDD" id="cd01556">
    <property type="entry name" value="EPSP_synthase"/>
    <property type="match status" value="1"/>
</dbReference>
<dbReference type="FunFam" id="3.65.10.10:FF:000010">
    <property type="entry name" value="3-phosphoshikimate 1-carboxyvinyltransferase"/>
    <property type="match status" value="1"/>
</dbReference>
<dbReference type="FunFam" id="3.65.10.10:FF:000011">
    <property type="entry name" value="3-phosphoshikimate 1-carboxyvinyltransferase"/>
    <property type="match status" value="1"/>
</dbReference>
<dbReference type="Gene3D" id="3.65.10.10">
    <property type="entry name" value="Enolpyruvate transferase domain"/>
    <property type="match status" value="2"/>
</dbReference>
<dbReference type="HAMAP" id="MF_00210">
    <property type="entry name" value="EPSP_synth"/>
    <property type="match status" value="1"/>
</dbReference>
<dbReference type="InterPro" id="IPR001986">
    <property type="entry name" value="Enolpyruvate_Tfrase_dom"/>
</dbReference>
<dbReference type="InterPro" id="IPR036968">
    <property type="entry name" value="Enolpyruvate_Tfrase_sf"/>
</dbReference>
<dbReference type="InterPro" id="IPR006264">
    <property type="entry name" value="EPSP_synthase"/>
</dbReference>
<dbReference type="InterPro" id="IPR023193">
    <property type="entry name" value="EPSP_synthase_CS"/>
</dbReference>
<dbReference type="InterPro" id="IPR013792">
    <property type="entry name" value="RNA3'P_cycl/enolpyr_Trfase_a/b"/>
</dbReference>
<dbReference type="NCBIfam" id="TIGR01356">
    <property type="entry name" value="aroA"/>
    <property type="match status" value="1"/>
</dbReference>
<dbReference type="PANTHER" id="PTHR21090">
    <property type="entry name" value="AROM/DEHYDROQUINATE SYNTHASE"/>
    <property type="match status" value="1"/>
</dbReference>
<dbReference type="PANTHER" id="PTHR21090:SF5">
    <property type="entry name" value="PENTAFUNCTIONAL AROM POLYPEPTIDE"/>
    <property type="match status" value="1"/>
</dbReference>
<dbReference type="Pfam" id="PF00275">
    <property type="entry name" value="EPSP_synthase"/>
    <property type="match status" value="1"/>
</dbReference>
<dbReference type="PIRSF" id="PIRSF000505">
    <property type="entry name" value="EPSPS"/>
    <property type="match status" value="1"/>
</dbReference>
<dbReference type="SUPFAM" id="SSF55205">
    <property type="entry name" value="EPT/RTPC-like"/>
    <property type="match status" value="1"/>
</dbReference>
<dbReference type="PROSITE" id="PS00104">
    <property type="entry name" value="EPSP_SYNTHASE_1"/>
    <property type="match status" value="1"/>
</dbReference>
<dbReference type="PROSITE" id="PS00885">
    <property type="entry name" value="EPSP_SYNTHASE_2"/>
    <property type="match status" value="1"/>
</dbReference>
<proteinExistence type="inferred from homology"/>
<accession>A4QC99</accession>